<sequence>MEAAPRVRSGLLRILLRAGRLSALLIQNRTHLYRFLLLKMAIFQHWVLGLAQEARGSGSDQARQLPEVIITCALSLALRAGLTLLWVPMWLLLWGPRLAYRVGLCCTRTVRLALGHLCVCEPLGLSPATFRDLFLSCLHSLMLVALLLLLLTWKLMQKAHHFSLGWLPSQNSVLLEAPALLRRLYLWVEHRTTLTSWNLAYLVTWTTCLASHLLQAAFEHTTQLAQAQEVKSQETSGPPPQFLIPESSTTESGPLPPQPETPGE</sequence>
<organism>
    <name type="scientific">Mus musculus</name>
    <name type="common">Mouse</name>
    <dbReference type="NCBI Taxonomy" id="10090"/>
    <lineage>
        <taxon>Eukaryota</taxon>
        <taxon>Metazoa</taxon>
        <taxon>Chordata</taxon>
        <taxon>Craniata</taxon>
        <taxon>Vertebrata</taxon>
        <taxon>Euteleostomi</taxon>
        <taxon>Mammalia</taxon>
        <taxon>Eutheria</taxon>
        <taxon>Euarchontoglires</taxon>
        <taxon>Glires</taxon>
        <taxon>Rodentia</taxon>
        <taxon>Myomorpha</taxon>
        <taxon>Muroidea</taxon>
        <taxon>Muridae</taxon>
        <taxon>Murinae</taxon>
        <taxon>Mus</taxon>
        <taxon>Mus</taxon>
    </lineage>
</organism>
<feature type="chain" id="PRO_0000308416" description="Transmembrane protein 270">
    <location>
        <begin position="1"/>
        <end position="264"/>
    </location>
</feature>
<feature type="transmembrane region" description="Helical" evidence="2">
    <location>
        <begin position="31"/>
        <end position="51"/>
    </location>
</feature>
<feature type="transmembrane region" description="Helical" evidence="2">
    <location>
        <begin position="74"/>
        <end position="94"/>
    </location>
</feature>
<feature type="transmembrane region" description="Helical" evidence="2">
    <location>
        <begin position="133"/>
        <end position="153"/>
    </location>
</feature>
<feature type="region of interest" description="Disordered" evidence="3">
    <location>
        <begin position="227"/>
        <end position="264"/>
    </location>
</feature>
<feature type="compositionally biased region" description="Polar residues" evidence="3">
    <location>
        <begin position="227"/>
        <end position="236"/>
    </location>
</feature>
<feature type="compositionally biased region" description="Pro residues" evidence="3">
    <location>
        <begin position="254"/>
        <end position="264"/>
    </location>
</feature>
<feature type="splice variant" id="VSP_028980" description="In isoform 2." evidence="5 6">
    <original>NSVLLEAPALLRRLYLWVEHRTTLTSWNLAYLVTWTTCLASHLLQAAFEHTTQLAQAQEVKSQETSGPPPQFLIPESSTTESGPLPPQPETPGE</original>
    <variation>GWGRGSNLADLSHPSSPYQCSCLAGPSCRILCCWKPRPC</variation>
    <location>
        <begin position="171"/>
        <end position="264"/>
    </location>
</feature>
<name>TM270_MOUSE</name>
<comment type="subcellular location">
    <subcellularLocation>
        <location evidence="7">Membrane</location>
        <topology evidence="7">Multi-pass membrane protein</topology>
    </subcellularLocation>
</comment>
<comment type="alternative products">
    <event type="alternative splicing"/>
    <isoform>
        <id>Q6UJB9-1</id>
        <name>1</name>
        <name>A</name>
        <sequence type="displayed"/>
    </isoform>
    <isoform>
        <id>Q6UJB9-2</id>
        <name>2</name>
        <name>B</name>
        <sequence type="described" ref="VSP_028980"/>
    </isoform>
</comment>
<comment type="tissue specificity">
    <text evidence="4">Testis.</text>
</comment>
<dbReference type="EMBL" id="AY369079">
    <property type="protein sequence ID" value="AAQ67392.1"/>
    <property type="molecule type" value="mRNA"/>
</dbReference>
<dbReference type="EMBL" id="AY369080">
    <property type="protein sequence ID" value="AAQ67393.1"/>
    <property type="molecule type" value="mRNA"/>
</dbReference>
<dbReference type="EMBL" id="AK007170">
    <property type="protein sequence ID" value="BAB24883.1"/>
    <property type="molecule type" value="mRNA"/>
</dbReference>
<dbReference type="EMBL" id="AC079938">
    <property type="status" value="NOT_ANNOTATED_CDS"/>
    <property type="molecule type" value="Genomic_DNA"/>
</dbReference>
<dbReference type="EMBL" id="BC114542">
    <property type="protein sequence ID" value="AAI14543.1"/>
    <property type="molecule type" value="mRNA"/>
</dbReference>
<dbReference type="CCDS" id="CCDS39313.1">
    <molecule id="Q6UJB9-2"/>
</dbReference>
<dbReference type="CCDS" id="CCDS80423.1">
    <molecule id="Q6UJB9-1"/>
</dbReference>
<dbReference type="RefSeq" id="NP_083957.1">
    <molecule id="Q6UJB9-2"/>
    <property type="nucleotide sequence ID" value="NM_029681.3"/>
</dbReference>
<dbReference type="RefSeq" id="NP_919041.1">
    <molecule id="Q6UJB9-1"/>
    <property type="nucleotide sequence ID" value="NM_194065.3"/>
</dbReference>
<dbReference type="FunCoup" id="Q6UJB9">
    <property type="interactions" value="1"/>
</dbReference>
<dbReference type="STRING" id="10090.ENSMUSP00000144496"/>
<dbReference type="PhosphoSitePlus" id="Q6UJB9"/>
<dbReference type="SwissPalm" id="Q6UJB9"/>
<dbReference type="PaxDb" id="10090-ENSMUSP00000045190"/>
<dbReference type="ProteomicsDB" id="259112">
    <molecule id="Q6UJB9-1"/>
</dbReference>
<dbReference type="ProteomicsDB" id="259113">
    <molecule id="Q6UJB9-2"/>
</dbReference>
<dbReference type="Antibodypedia" id="28566">
    <property type="antibodies" value="36 antibodies from 10 providers"/>
</dbReference>
<dbReference type="DNASU" id="76629"/>
<dbReference type="Ensembl" id="ENSMUST00000047305.6">
    <molecule id="Q6UJB9-2"/>
    <property type="protein sequence ID" value="ENSMUSP00000045190.6"/>
    <property type="gene ID" value="ENSMUSG00000040576.9"/>
</dbReference>
<dbReference type="Ensembl" id="ENSMUST00000201316.4">
    <molecule id="Q6UJB9-1"/>
    <property type="protein sequence ID" value="ENSMUSP00000144496.2"/>
    <property type="gene ID" value="ENSMUSG00000040576.9"/>
</dbReference>
<dbReference type="GeneID" id="76629"/>
<dbReference type="KEGG" id="mmu:76629"/>
<dbReference type="UCSC" id="uc008zww.2">
    <molecule id="Q6UJB9-1"/>
    <property type="organism name" value="mouse"/>
</dbReference>
<dbReference type="UCSC" id="uc008zwx.2">
    <molecule id="Q6UJB9-2"/>
    <property type="organism name" value="mouse"/>
</dbReference>
<dbReference type="AGR" id="MGI:1923879"/>
<dbReference type="CTD" id="135886"/>
<dbReference type="MGI" id="MGI:1923879">
    <property type="gene designation" value="Tmem270"/>
</dbReference>
<dbReference type="VEuPathDB" id="HostDB:ENSMUSG00000040576"/>
<dbReference type="eggNOG" id="ENOG502T0K9">
    <property type="taxonomic scope" value="Eukaryota"/>
</dbReference>
<dbReference type="GeneTree" id="ENSGT00390000009243"/>
<dbReference type="HOGENOM" id="CLU_114159_0_0_1"/>
<dbReference type="InParanoid" id="Q6UJB9"/>
<dbReference type="OMA" id="LYWWVES"/>
<dbReference type="OrthoDB" id="9837709at2759"/>
<dbReference type="PhylomeDB" id="Q6UJB9"/>
<dbReference type="TreeFam" id="TF337697"/>
<dbReference type="BioGRID-ORCS" id="76629">
    <property type="hits" value="0 hits in 80 CRISPR screens"/>
</dbReference>
<dbReference type="PRO" id="PR:Q6UJB9"/>
<dbReference type="Proteomes" id="UP000000589">
    <property type="component" value="Chromosome 5"/>
</dbReference>
<dbReference type="RNAct" id="Q6UJB9">
    <property type="molecule type" value="protein"/>
</dbReference>
<dbReference type="Bgee" id="ENSMUSG00000040576">
    <property type="expression patterns" value="Expressed in spermatid and 6 other cell types or tissues"/>
</dbReference>
<dbReference type="GO" id="GO:0016020">
    <property type="term" value="C:membrane"/>
    <property type="evidence" value="ECO:0007669"/>
    <property type="project" value="UniProtKB-SubCell"/>
</dbReference>
<dbReference type="InterPro" id="IPR029166">
    <property type="entry name" value="WBS28"/>
</dbReference>
<dbReference type="PANTHER" id="PTHR37369">
    <property type="entry name" value="TRANSMEMBRANE PROTEIN 270"/>
    <property type="match status" value="1"/>
</dbReference>
<dbReference type="PANTHER" id="PTHR37369:SF1">
    <property type="entry name" value="TRANSMEMBRANE PROTEIN 270"/>
    <property type="match status" value="1"/>
</dbReference>
<dbReference type="Pfam" id="PF15164">
    <property type="entry name" value="WBS28"/>
    <property type="match status" value="1"/>
</dbReference>
<keyword id="KW-0025">Alternative splicing</keyword>
<keyword id="KW-0472">Membrane</keyword>
<keyword id="KW-1185">Reference proteome</keyword>
<keyword id="KW-0812">Transmembrane</keyword>
<keyword id="KW-1133">Transmembrane helix</keyword>
<accession>Q6UJB9</accession>
<accession>Q9D9B5</accession>
<evidence type="ECO:0000250" key="1">
    <source>
        <dbReference type="UniProtKB" id="Q6UE05"/>
    </source>
</evidence>
<evidence type="ECO:0000255" key="2"/>
<evidence type="ECO:0000256" key="3">
    <source>
        <dbReference type="SAM" id="MobiDB-lite"/>
    </source>
</evidence>
<evidence type="ECO:0000269" key="4">
    <source>
    </source>
</evidence>
<evidence type="ECO:0000303" key="5">
    <source>
    </source>
</evidence>
<evidence type="ECO:0000303" key="6">
    <source>
    </source>
</evidence>
<evidence type="ECO:0000305" key="7"/>
<evidence type="ECO:0000312" key="8">
    <source>
        <dbReference type="MGI" id="MGI:1923879"/>
    </source>
</evidence>
<protein>
    <recommendedName>
        <fullName evidence="7">Transmembrane protein 270</fullName>
    </recommendedName>
</protein>
<proteinExistence type="evidence at transcript level"/>
<gene>
    <name evidence="1" type="primary">Tmem270</name>
    <name evidence="8" type="synonym">Wbscr28</name>
</gene>
<reference key="1">
    <citation type="journal article" date="2008" name="Eur. J. Hum. Genet.">
        <title>Williams-Beuren syndrome TRIM50 encodes an E3 ubiquitin ligase.</title>
        <authorList>
            <person name="Micale L."/>
            <person name="Fusco C."/>
            <person name="Augello B."/>
            <person name="Napolitano L.M.R."/>
            <person name="Dermitzakis E.T."/>
            <person name="Meroni G."/>
            <person name="Merla G."/>
            <person name="Reymond A."/>
        </authorList>
    </citation>
    <scope>NUCLEOTIDE SEQUENCE [MRNA] (ISOFORMS 1 AND 2)</scope>
    <scope>TISSUE SPECIFICITY</scope>
</reference>
<reference key="2">
    <citation type="journal article" date="2005" name="Science">
        <title>The transcriptional landscape of the mammalian genome.</title>
        <authorList>
            <person name="Carninci P."/>
            <person name="Kasukawa T."/>
            <person name="Katayama S."/>
            <person name="Gough J."/>
            <person name="Frith M.C."/>
            <person name="Maeda N."/>
            <person name="Oyama R."/>
            <person name="Ravasi T."/>
            <person name="Lenhard B."/>
            <person name="Wells C."/>
            <person name="Kodzius R."/>
            <person name="Shimokawa K."/>
            <person name="Bajic V.B."/>
            <person name="Brenner S.E."/>
            <person name="Batalov S."/>
            <person name="Forrest A.R."/>
            <person name="Zavolan M."/>
            <person name="Davis M.J."/>
            <person name="Wilming L.G."/>
            <person name="Aidinis V."/>
            <person name="Allen J.E."/>
            <person name="Ambesi-Impiombato A."/>
            <person name="Apweiler R."/>
            <person name="Aturaliya R.N."/>
            <person name="Bailey T.L."/>
            <person name="Bansal M."/>
            <person name="Baxter L."/>
            <person name="Beisel K.W."/>
            <person name="Bersano T."/>
            <person name="Bono H."/>
            <person name="Chalk A.M."/>
            <person name="Chiu K.P."/>
            <person name="Choudhary V."/>
            <person name="Christoffels A."/>
            <person name="Clutterbuck D.R."/>
            <person name="Crowe M.L."/>
            <person name="Dalla E."/>
            <person name="Dalrymple B.P."/>
            <person name="de Bono B."/>
            <person name="Della Gatta G."/>
            <person name="di Bernardo D."/>
            <person name="Down T."/>
            <person name="Engstrom P."/>
            <person name="Fagiolini M."/>
            <person name="Faulkner G."/>
            <person name="Fletcher C.F."/>
            <person name="Fukushima T."/>
            <person name="Furuno M."/>
            <person name="Futaki S."/>
            <person name="Gariboldi M."/>
            <person name="Georgii-Hemming P."/>
            <person name="Gingeras T.R."/>
            <person name="Gojobori T."/>
            <person name="Green R.E."/>
            <person name="Gustincich S."/>
            <person name="Harbers M."/>
            <person name="Hayashi Y."/>
            <person name="Hensch T.K."/>
            <person name="Hirokawa N."/>
            <person name="Hill D."/>
            <person name="Huminiecki L."/>
            <person name="Iacono M."/>
            <person name="Ikeo K."/>
            <person name="Iwama A."/>
            <person name="Ishikawa T."/>
            <person name="Jakt M."/>
            <person name="Kanapin A."/>
            <person name="Katoh M."/>
            <person name="Kawasawa Y."/>
            <person name="Kelso J."/>
            <person name="Kitamura H."/>
            <person name="Kitano H."/>
            <person name="Kollias G."/>
            <person name="Krishnan S.P."/>
            <person name="Kruger A."/>
            <person name="Kummerfeld S.K."/>
            <person name="Kurochkin I.V."/>
            <person name="Lareau L.F."/>
            <person name="Lazarevic D."/>
            <person name="Lipovich L."/>
            <person name="Liu J."/>
            <person name="Liuni S."/>
            <person name="McWilliam S."/>
            <person name="Madan Babu M."/>
            <person name="Madera M."/>
            <person name="Marchionni L."/>
            <person name="Matsuda H."/>
            <person name="Matsuzawa S."/>
            <person name="Miki H."/>
            <person name="Mignone F."/>
            <person name="Miyake S."/>
            <person name="Morris K."/>
            <person name="Mottagui-Tabar S."/>
            <person name="Mulder N."/>
            <person name="Nakano N."/>
            <person name="Nakauchi H."/>
            <person name="Ng P."/>
            <person name="Nilsson R."/>
            <person name="Nishiguchi S."/>
            <person name="Nishikawa S."/>
            <person name="Nori F."/>
            <person name="Ohara O."/>
            <person name="Okazaki Y."/>
            <person name="Orlando V."/>
            <person name="Pang K.C."/>
            <person name="Pavan W.J."/>
            <person name="Pavesi G."/>
            <person name="Pesole G."/>
            <person name="Petrovsky N."/>
            <person name="Piazza S."/>
            <person name="Reed J."/>
            <person name="Reid J.F."/>
            <person name="Ring B.Z."/>
            <person name="Ringwald M."/>
            <person name="Rost B."/>
            <person name="Ruan Y."/>
            <person name="Salzberg S.L."/>
            <person name="Sandelin A."/>
            <person name="Schneider C."/>
            <person name="Schoenbach C."/>
            <person name="Sekiguchi K."/>
            <person name="Semple C.A."/>
            <person name="Seno S."/>
            <person name="Sessa L."/>
            <person name="Sheng Y."/>
            <person name="Shibata Y."/>
            <person name="Shimada H."/>
            <person name="Shimada K."/>
            <person name="Silva D."/>
            <person name="Sinclair B."/>
            <person name="Sperling S."/>
            <person name="Stupka E."/>
            <person name="Sugiura K."/>
            <person name="Sultana R."/>
            <person name="Takenaka Y."/>
            <person name="Taki K."/>
            <person name="Tammoja K."/>
            <person name="Tan S.L."/>
            <person name="Tang S."/>
            <person name="Taylor M.S."/>
            <person name="Tegner J."/>
            <person name="Teichmann S.A."/>
            <person name="Ueda H.R."/>
            <person name="van Nimwegen E."/>
            <person name="Verardo R."/>
            <person name="Wei C.L."/>
            <person name="Yagi K."/>
            <person name="Yamanishi H."/>
            <person name="Zabarovsky E."/>
            <person name="Zhu S."/>
            <person name="Zimmer A."/>
            <person name="Hide W."/>
            <person name="Bult C."/>
            <person name="Grimmond S.M."/>
            <person name="Teasdale R.D."/>
            <person name="Liu E.T."/>
            <person name="Brusic V."/>
            <person name="Quackenbush J."/>
            <person name="Wahlestedt C."/>
            <person name="Mattick J.S."/>
            <person name="Hume D.A."/>
            <person name="Kai C."/>
            <person name="Sasaki D."/>
            <person name="Tomaru Y."/>
            <person name="Fukuda S."/>
            <person name="Kanamori-Katayama M."/>
            <person name="Suzuki M."/>
            <person name="Aoki J."/>
            <person name="Arakawa T."/>
            <person name="Iida J."/>
            <person name="Imamura K."/>
            <person name="Itoh M."/>
            <person name="Kato T."/>
            <person name="Kawaji H."/>
            <person name="Kawagashira N."/>
            <person name="Kawashima T."/>
            <person name="Kojima M."/>
            <person name="Kondo S."/>
            <person name="Konno H."/>
            <person name="Nakano K."/>
            <person name="Ninomiya N."/>
            <person name="Nishio T."/>
            <person name="Okada M."/>
            <person name="Plessy C."/>
            <person name="Shibata K."/>
            <person name="Shiraki T."/>
            <person name="Suzuki S."/>
            <person name="Tagami M."/>
            <person name="Waki K."/>
            <person name="Watahiki A."/>
            <person name="Okamura-Oho Y."/>
            <person name="Suzuki H."/>
            <person name="Kawai J."/>
            <person name="Hayashizaki Y."/>
        </authorList>
    </citation>
    <scope>NUCLEOTIDE SEQUENCE [LARGE SCALE MRNA] (ISOFORM 2)</scope>
    <source>
        <strain>C57BL/6J</strain>
        <tissue>Testis</tissue>
    </source>
</reference>
<reference key="3">
    <citation type="journal article" date="2003" name="Genome Res.">
        <title>Analysis of the gene-dense major histocompatibility complex class III region and its comparison to mouse.</title>
        <authorList>
            <person name="Xie T."/>
            <person name="Rowen L."/>
            <person name="Aguado B."/>
            <person name="Ahearn M.E."/>
            <person name="Madan A."/>
            <person name="Qin S."/>
            <person name="Campbell R.D."/>
            <person name="Hood L."/>
        </authorList>
    </citation>
    <scope>NUCLEOTIDE SEQUENCE [LARGE SCALE GENOMIC DNA]</scope>
    <source>
        <strain>129</strain>
    </source>
</reference>
<reference key="4">
    <citation type="journal article" date="2004" name="Genome Res.">
        <title>The status, quality, and expansion of the NIH full-length cDNA project: the Mammalian Gene Collection (MGC).</title>
        <authorList>
            <consortium name="The MGC Project Team"/>
        </authorList>
    </citation>
    <scope>NUCLEOTIDE SEQUENCE [LARGE SCALE MRNA]</scope>
</reference>